<comment type="function">
    <text evidence="1">An accessory protein needed during the final step in the assembly of 30S ribosomal subunit, possibly for assembly of the head region. Essential for efficient processing of 16S rRNA. May be needed both before and after RbfA during the maturation of 16S rRNA. It has affinity for free ribosomal 30S subunits but not for 70S ribosomes.</text>
</comment>
<comment type="subunit">
    <text evidence="1">Binds ribosomal protein uS19.</text>
</comment>
<comment type="subcellular location">
    <subcellularLocation>
        <location evidence="1">Cytoplasm</location>
    </subcellularLocation>
</comment>
<comment type="domain">
    <text evidence="1">The PRC barrel domain binds ribosomal protein uS19.</text>
</comment>
<comment type="similarity">
    <text evidence="1">Belongs to the RimM family.</text>
</comment>
<sequence length="208" mass="23153">MSEWIEIGKIVAPQGLKGDLRVYPSSDFPERFTEPGKRWLLSPGQVEPISIELLSGRYVPGKGLYVIELAGIKSRQQAEALRNSQLLIEKGDRPQLEADEFYVPDLIGLTVINQLNGKTIGKVINIIFAGNDLLEVEKISTDTPVISEVVENNLPSKSKRSRDTKNQKKNQSPPSKKILIPFVKEIVPIVNFEQSIIEITPPDGLIDL</sequence>
<proteinExistence type="inferred from homology"/>
<feature type="chain" id="PRO_0000321768" description="Ribosome maturation factor RimM">
    <location>
        <begin position="1"/>
        <end position="208"/>
    </location>
</feature>
<feature type="domain" description="PRC barrel" evidence="1">
    <location>
        <begin position="98"/>
        <end position="205"/>
    </location>
</feature>
<feature type="region of interest" description="Disordered" evidence="2">
    <location>
        <begin position="154"/>
        <end position="174"/>
    </location>
</feature>
<protein>
    <recommendedName>
        <fullName evidence="1">Ribosome maturation factor RimM</fullName>
    </recommendedName>
</protein>
<gene>
    <name evidence="1" type="primary">rimM</name>
    <name type="ordered locus">Tery_4627</name>
</gene>
<evidence type="ECO:0000255" key="1">
    <source>
        <dbReference type="HAMAP-Rule" id="MF_00014"/>
    </source>
</evidence>
<evidence type="ECO:0000256" key="2">
    <source>
        <dbReference type="SAM" id="MobiDB-lite"/>
    </source>
</evidence>
<name>RIMM_TRIEI</name>
<dbReference type="EMBL" id="CP000393">
    <property type="protein sequence ID" value="ABG53599.1"/>
    <property type="molecule type" value="Genomic_DNA"/>
</dbReference>
<dbReference type="RefSeq" id="WP_011613916.1">
    <property type="nucleotide sequence ID" value="NC_008312.1"/>
</dbReference>
<dbReference type="SMR" id="Q10VX5"/>
<dbReference type="STRING" id="203124.Tery_4627"/>
<dbReference type="KEGG" id="ter:Tery_4627"/>
<dbReference type="eggNOG" id="COG0806">
    <property type="taxonomic scope" value="Bacteria"/>
</dbReference>
<dbReference type="HOGENOM" id="CLU_077636_3_0_3"/>
<dbReference type="OrthoDB" id="9810331at2"/>
<dbReference type="GO" id="GO:0005737">
    <property type="term" value="C:cytoplasm"/>
    <property type="evidence" value="ECO:0007669"/>
    <property type="project" value="UniProtKB-SubCell"/>
</dbReference>
<dbReference type="GO" id="GO:0005840">
    <property type="term" value="C:ribosome"/>
    <property type="evidence" value="ECO:0007669"/>
    <property type="project" value="InterPro"/>
</dbReference>
<dbReference type="GO" id="GO:0043022">
    <property type="term" value="F:ribosome binding"/>
    <property type="evidence" value="ECO:0007669"/>
    <property type="project" value="InterPro"/>
</dbReference>
<dbReference type="GO" id="GO:0042274">
    <property type="term" value="P:ribosomal small subunit biogenesis"/>
    <property type="evidence" value="ECO:0007669"/>
    <property type="project" value="UniProtKB-UniRule"/>
</dbReference>
<dbReference type="GO" id="GO:0006364">
    <property type="term" value="P:rRNA processing"/>
    <property type="evidence" value="ECO:0007669"/>
    <property type="project" value="UniProtKB-UniRule"/>
</dbReference>
<dbReference type="Gene3D" id="2.30.30.240">
    <property type="entry name" value="PRC-barrel domain"/>
    <property type="match status" value="1"/>
</dbReference>
<dbReference type="Gene3D" id="2.40.30.60">
    <property type="entry name" value="RimM"/>
    <property type="match status" value="1"/>
</dbReference>
<dbReference type="HAMAP" id="MF_00014">
    <property type="entry name" value="Ribosome_mat_RimM"/>
    <property type="match status" value="1"/>
</dbReference>
<dbReference type="InterPro" id="IPR011033">
    <property type="entry name" value="PRC_barrel-like_sf"/>
</dbReference>
<dbReference type="InterPro" id="IPR056792">
    <property type="entry name" value="PRC_RimM"/>
</dbReference>
<dbReference type="InterPro" id="IPR011961">
    <property type="entry name" value="RimM"/>
</dbReference>
<dbReference type="InterPro" id="IPR002676">
    <property type="entry name" value="RimM_N"/>
</dbReference>
<dbReference type="InterPro" id="IPR036976">
    <property type="entry name" value="RimM_N_sf"/>
</dbReference>
<dbReference type="InterPro" id="IPR009000">
    <property type="entry name" value="Transl_B-barrel_sf"/>
</dbReference>
<dbReference type="NCBIfam" id="TIGR02273">
    <property type="entry name" value="16S_RimM"/>
    <property type="match status" value="1"/>
</dbReference>
<dbReference type="PANTHER" id="PTHR33692">
    <property type="entry name" value="RIBOSOME MATURATION FACTOR RIMM"/>
    <property type="match status" value="1"/>
</dbReference>
<dbReference type="PANTHER" id="PTHR33692:SF1">
    <property type="entry name" value="RIBOSOME MATURATION FACTOR RIMM"/>
    <property type="match status" value="1"/>
</dbReference>
<dbReference type="Pfam" id="PF24986">
    <property type="entry name" value="PRC_RimM"/>
    <property type="match status" value="1"/>
</dbReference>
<dbReference type="Pfam" id="PF01782">
    <property type="entry name" value="RimM"/>
    <property type="match status" value="1"/>
</dbReference>
<dbReference type="SUPFAM" id="SSF50346">
    <property type="entry name" value="PRC-barrel domain"/>
    <property type="match status" value="1"/>
</dbReference>
<dbReference type="SUPFAM" id="SSF50447">
    <property type="entry name" value="Translation proteins"/>
    <property type="match status" value="1"/>
</dbReference>
<reference key="1">
    <citation type="journal article" date="2015" name="Proc. Natl. Acad. Sci. U.S.A.">
        <title>Trichodesmium genome maintains abundant, widespread noncoding DNA in situ, despite oligotrophic lifestyle.</title>
        <authorList>
            <person name="Walworth N."/>
            <person name="Pfreundt U."/>
            <person name="Nelson W.C."/>
            <person name="Mincer T."/>
            <person name="Heidelberg J.F."/>
            <person name="Fu F."/>
            <person name="Waterbury J.B."/>
            <person name="Glavina del Rio T."/>
            <person name="Goodwin L."/>
            <person name="Kyrpides N.C."/>
            <person name="Land M.L."/>
            <person name="Woyke T."/>
            <person name="Hutchins D.A."/>
            <person name="Hess W.R."/>
            <person name="Webb E.A."/>
        </authorList>
    </citation>
    <scope>NUCLEOTIDE SEQUENCE [LARGE SCALE GENOMIC DNA]</scope>
    <source>
        <strain>IMS101</strain>
    </source>
</reference>
<organism>
    <name type="scientific">Trichodesmium erythraeum (strain IMS101)</name>
    <dbReference type="NCBI Taxonomy" id="203124"/>
    <lineage>
        <taxon>Bacteria</taxon>
        <taxon>Bacillati</taxon>
        <taxon>Cyanobacteriota</taxon>
        <taxon>Cyanophyceae</taxon>
        <taxon>Oscillatoriophycideae</taxon>
        <taxon>Oscillatoriales</taxon>
        <taxon>Microcoleaceae</taxon>
        <taxon>Trichodesmium</taxon>
    </lineage>
</organism>
<keyword id="KW-0143">Chaperone</keyword>
<keyword id="KW-0963">Cytoplasm</keyword>
<keyword id="KW-0690">Ribosome biogenesis</keyword>
<keyword id="KW-0698">rRNA processing</keyword>
<accession>Q10VX5</accession>